<keyword id="KW-0067">ATP-binding</keyword>
<keyword id="KW-0997">Cell inner membrane</keyword>
<keyword id="KW-1003">Cell membrane</keyword>
<keyword id="KW-0963">Cytoplasm</keyword>
<keyword id="KW-0472">Membrane</keyword>
<keyword id="KW-0479">Metal-binding</keyword>
<keyword id="KW-0547">Nucleotide-binding</keyword>
<keyword id="KW-0653">Protein transport</keyword>
<keyword id="KW-1185">Reference proteome</keyword>
<keyword id="KW-1278">Translocase</keyword>
<keyword id="KW-0811">Translocation</keyword>
<keyword id="KW-0813">Transport</keyword>
<keyword id="KW-0862">Zinc</keyword>
<protein>
    <recommendedName>
        <fullName evidence="1">Protein translocase subunit SecA</fullName>
        <ecNumber evidence="1">7.4.2.8</ecNumber>
    </recommendedName>
</protein>
<evidence type="ECO:0000255" key="1">
    <source>
        <dbReference type="HAMAP-Rule" id="MF_01382"/>
    </source>
</evidence>
<evidence type="ECO:0000256" key="2">
    <source>
        <dbReference type="SAM" id="MobiDB-lite"/>
    </source>
</evidence>
<feature type="chain" id="PRO_0000320989" description="Protein translocase subunit SecA">
    <location>
        <begin position="1"/>
        <end position="908"/>
    </location>
</feature>
<feature type="region of interest" description="Disordered" evidence="2">
    <location>
        <begin position="882"/>
        <end position="908"/>
    </location>
</feature>
<feature type="compositionally biased region" description="Basic residues" evidence="2">
    <location>
        <begin position="898"/>
        <end position="908"/>
    </location>
</feature>
<feature type="binding site" evidence="1">
    <location>
        <position position="87"/>
    </location>
    <ligand>
        <name>ATP</name>
        <dbReference type="ChEBI" id="CHEBI:30616"/>
    </ligand>
</feature>
<feature type="binding site" evidence="1">
    <location>
        <begin position="105"/>
        <end position="109"/>
    </location>
    <ligand>
        <name>ATP</name>
        <dbReference type="ChEBI" id="CHEBI:30616"/>
    </ligand>
</feature>
<feature type="binding site" evidence="1">
    <location>
        <position position="512"/>
    </location>
    <ligand>
        <name>ATP</name>
        <dbReference type="ChEBI" id="CHEBI:30616"/>
    </ligand>
</feature>
<feature type="binding site" evidence="1">
    <location>
        <position position="892"/>
    </location>
    <ligand>
        <name>Zn(2+)</name>
        <dbReference type="ChEBI" id="CHEBI:29105"/>
    </ligand>
</feature>
<feature type="binding site" evidence="1">
    <location>
        <position position="894"/>
    </location>
    <ligand>
        <name>Zn(2+)</name>
        <dbReference type="ChEBI" id="CHEBI:29105"/>
    </ligand>
</feature>
<feature type="binding site" evidence="1">
    <location>
        <position position="903"/>
    </location>
    <ligand>
        <name>Zn(2+)</name>
        <dbReference type="ChEBI" id="CHEBI:29105"/>
    </ligand>
</feature>
<feature type="binding site" evidence="1">
    <location>
        <position position="904"/>
    </location>
    <ligand>
        <name>Zn(2+)</name>
        <dbReference type="ChEBI" id="CHEBI:29105"/>
    </ligand>
</feature>
<proteinExistence type="inferred from homology"/>
<dbReference type="EC" id="7.4.2.8" evidence="1"/>
<dbReference type="EMBL" id="CP000507">
    <property type="protein sequence ID" value="ABL98573.1"/>
    <property type="molecule type" value="Genomic_DNA"/>
</dbReference>
<dbReference type="RefSeq" id="WP_011758483.1">
    <property type="nucleotide sequence ID" value="NC_008700.1"/>
</dbReference>
<dbReference type="SMR" id="A1S2G7"/>
<dbReference type="STRING" id="326297.Sama_0362"/>
<dbReference type="KEGG" id="saz:Sama_0362"/>
<dbReference type="eggNOG" id="COG0653">
    <property type="taxonomic scope" value="Bacteria"/>
</dbReference>
<dbReference type="HOGENOM" id="CLU_005314_3_0_6"/>
<dbReference type="OrthoDB" id="9805579at2"/>
<dbReference type="Proteomes" id="UP000009175">
    <property type="component" value="Chromosome"/>
</dbReference>
<dbReference type="GO" id="GO:0031522">
    <property type="term" value="C:cell envelope Sec protein transport complex"/>
    <property type="evidence" value="ECO:0007669"/>
    <property type="project" value="TreeGrafter"/>
</dbReference>
<dbReference type="GO" id="GO:0005829">
    <property type="term" value="C:cytosol"/>
    <property type="evidence" value="ECO:0007669"/>
    <property type="project" value="TreeGrafter"/>
</dbReference>
<dbReference type="GO" id="GO:0005886">
    <property type="term" value="C:plasma membrane"/>
    <property type="evidence" value="ECO:0007669"/>
    <property type="project" value="UniProtKB-SubCell"/>
</dbReference>
<dbReference type="GO" id="GO:0005524">
    <property type="term" value="F:ATP binding"/>
    <property type="evidence" value="ECO:0007669"/>
    <property type="project" value="UniProtKB-UniRule"/>
</dbReference>
<dbReference type="GO" id="GO:0046872">
    <property type="term" value="F:metal ion binding"/>
    <property type="evidence" value="ECO:0007669"/>
    <property type="project" value="UniProtKB-KW"/>
</dbReference>
<dbReference type="GO" id="GO:0008564">
    <property type="term" value="F:protein-exporting ATPase activity"/>
    <property type="evidence" value="ECO:0007669"/>
    <property type="project" value="UniProtKB-EC"/>
</dbReference>
<dbReference type="GO" id="GO:0065002">
    <property type="term" value="P:intracellular protein transmembrane transport"/>
    <property type="evidence" value="ECO:0007669"/>
    <property type="project" value="UniProtKB-UniRule"/>
</dbReference>
<dbReference type="GO" id="GO:0017038">
    <property type="term" value="P:protein import"/>
    <property type="evidence" value="ECO:0007669"/>
    <property type="project" value="InterPro"/>
</dbReference>
<dbReference type="GO" id="GO:0006605">
    <property type="term" value="P:protein targeting"/>
    <property type="evidence" value="ECO:0007669"/>
    <property type="project" value="UniProtKB-UniRule"/>
</dbReference>
<dbReference type="GO" id="GO:0043952">
    <property type="term" value="P:protein transport by the Sec complex"/>
    <property type="evidence" value="ECO:0007669"/>
    <property type="project" value="TreeGrafter"/>
</dbReference>
<dbReference type="CDD" id="cd17928">
    <property type="entry name" value="DEXDc_SecA"/>
    <property type="match status" value="1"/>
</dbReference>
<dbReference type="CDD" id="cd18803">
    <property type="entry name" value="SF2_C_secA"/>
    <property type="match status" value="1"/>
</dbReference>
<dbReference type="FunFam" id="1.10.3060.10:FF:000001">
    <property type="entry name" value="Preprotein translocase subunit SecA"/>
    <property type="match status" value="1"/>
</dbReference>
<dbReference type="FunFam" id="3.40.50.300:FF:000081">
    <property type="entry name" value="Preprotein translocase subunit SecA"/>
    <property type="match status" value="1"/>
</dbReference>
<dbReference type="FunFam" id="3.40.50.300:FF:000113">
    <property type="entry name" value="Preprotein translocase subunit SecA"/>
    <property type="match status" value="1"/>
</dbReference>
<dbReference type="FunFam" id="3.90.1440.10:FF:000001">
    <property type="entry name" value="Preprotein translocase subunit SecA"/>
    <property type="match status" value="1"/>
</dbReference>
<dbReference type="Gene3D" id="1.10.3060.10">
    <property type="entry name" value="Helical scaffold and wing domains of SecA"/>
    <property type="match status" value="1"/>
</dbReference>
<dbReference type="Gene3D" id="3.40.50.300">
    <property type="entry name" value="P-loop containing nucleotide triphosphate hydrolases"/>
    <property type="match status" value="2"/>
</dbReference>
<dbReference type="Gene3D" id="3.90.1440.10">
    <property type="entry name" value="SecA, preprotein cross-linking domain"/>
    <property type="match status" value="1"/>
</dbReference>
<dbReference type="HAMAP" id="MF_01382">
    <property type="entry name" value="SecA"/>
    <property type="match status" value="1"/>
</dbReference>
<dbReference type="InterPro" id="IPR014001">
    <property type="entry name" value="Helicase_ATP-bd"/>
</dbReference>
<dbReference type="InterPro" id="IPR001650">
    <property type="entry name" value="Helicase_C-like"/>
</dbReference>
<dbReference type="InterPro" id="IPR027417">
    <property type="entry name" value="P-loop_NTPase"/>
</dbReference>
<dbReference type="InterPro" id="IPR004027">
    <property type="entry name" value="SEC_C_motif"/>
</dbReference>
<dbReference type="InterPro" id="IPR000185">
    <property type="entry name" value="SecA"/>
</dbReference>
<dbReference type="InterPro" id="IPR020937">
    <property type="entry name" value="SecA_CS"/>
</dbReference>
<dbReference type="InterPro" id="IPR011115">
    <property type="entry name" value="SecA_DEAD"/>
</dbReference>
<dbReference type="InterPro" id="IPR014018">
    <property type="entry name" value="SecA_motor_DEAD"/>
</dbReference>
<dbReference type="InterPro" id="IPR011130">
    <property type="entry name" value="SecA_preprotein_X-link_dom"/>
</dbReference>
<dbReference type="InterPro" id="IPR044722">
    <property type="entry name" value="SecA_SF2_C"/>
</dbReference>
<dbReference type="InterPro" id="IPR011116">
    <property type="entry name" value="SecA_Wing/Scaffold"/>
</dbReference>
<dbReference type="InterPro" id="IPR036266">
    <property type="entry name" value="SecA_Wing/Scaffold_sf"/>
</dbReference>
<dbReference type="InterPro" id="IPR036670">
    <property type="entry name" value="SecA_X-link_sf"/>
</dbReference>
<dbReference type="NCBIfam" id="NF009538">
    <property type="entry name" value="PRK12904.1"/>
    <property type="match status" value="1"/>
</dbReference>
<dbReference type="NCBIfam" id="TIGR00963">
    <property type="entry name" value="secA"/>
    <property type="match status" value="1"/>
</dbReference>
<dbReference type="PANTHER" id="PTHR30612:SF0">
    <property type="entry name" value="CHLOROPLAST PROTEIN-TRANSPORTING ATPASE"/>
    <property type="match status" value="1"/>
</dbReference>
<dbReference type="PANTHER" id="PTHR30612">
    <property type="entry name" value="SECA INNER MEMBRANE COMPONENT OF SEC PROTEIN SECRETION SYSTEM"/>
    <property type="match status" value="1"/>
</dbReference>
<dbReference type="Pfam" id="PF21090">
    <property type="entry name" value="P-loop_SecA"/>
    <property type="match status" value="1"/>
</dbReference>
<dbReference type="Pfam" id="PF02810">
    <property type="entry name" value="SEC-C"/>
    <property type="match status" value="1"/>
</dbReference>
<dbReference type="Pfam" id="PF07517">
    <property type="entry name" value="SecA_DEAD"/>
    <property type="match status" value="1"/>
</dbReference>
<dbReference type="Pfam" id="PF01043">
    <property type="entry name" value="SecA_PP_bind"/>
    <property type="match status" value="1"/>
</dbReference>
<dbReference type="Pfam" id="PF07516">
    <property type="entry name" value="SecA_SW"/>
    <property type="match status" value="1"/>
</dbReference>
<dbReference type="PRINTS" id="PR00906">
    <property type="entry name" value="SECA"/>
</dbReference>
<dbReference type="SMART" id="SM00957">
    <property type="entry name" value="SecA_DEAD"/>
    <property type="match status" value="1"/>
</dbReference>
<dbReference type="SMART" id="SM00958">
    <property type="entry name" value="SecA_PP_bind"/>
    <property type="match status" value="1"/>
</dbReference>
<dbReference type="SUPFAM" id="SSF81886">
    <property type="entry name" value="Helical scaffold and wing domains of SecA"/>
    <property type="match status" value="1"/>
</dbReference>
<dbReference type="SUPFAM" id="SSF52540">
    <property type="entry name" value="P-loop containing nucleoside triphosphate hydrolases"/>
    <property type="match status" value="2"/>
</dbReference>
<dbReference type="SUPFAM" id="SSF81767">
    <property type="entry name" value="Pre-protein crosslinking domain of SecA"/>
    <property type="match status" value="1"/>
</dbReference>
<dbReference type="PROSITE" id="PS01312">
    <property type="entry name" value="SECA"/>
    <property type="match status" value="1"/>
</dbReference>
<dbReference type="PROSITE" id="PS51196">
    <property type="entry name" value="SECA_MOTOR_DEAD"/>
    <property type="match status" value="1"/>
</dbReference>
<reference key="1">
    <citation type="submission" date="2006-12" db="EMBL/GenBank/DDBJ databases">
        <title>Complete sequence of Shewanella amazonensis SB2B.</title>
        <authorList>
            <consortium name="US DOE Joint Genome Institute"/>
            <person name="Copeland A."/>
            <person name="Lucas S."/>
            <person name="Lapidus A."/>
            <person name="Barry K."/>
            <person name="Detter J.C."/>
            <person name="Glavina del Rio T."/>
            <person name="Hammon N."/>
            <person name="Israni S."/>
            <person name="Dalin E."/>
            <person name="Tice H."/>
            <person name="Pitluck S."/>
            <person name="Munk A.C."/>
            <person name="Brettin T."/>
            <person name="Bruce D."/>
            <person name="Han C."/>
            <person name="Tapia R."/>
            <person name="Gilna P."/>
            <person name="Schmutz J."/>
            <person name="Larimer F."/>
            <person name="Land M."/>
            <person name="Hauser L."/>
            <person name="Kyrpides N."/>
            <person name="Mikhailova N."/>
            <person name="Fredrickson J."/>
            <person name="Richardson P."/>
        </authorList>
    </citation>
    <scope>NUCLEOTIDE SEQUENCE [LARGE SCALE GENOMIC DNA]</scope>
    <source>
        <strain>ATCC BAA-1098 / SB2B</strain>
    </source>
</reference>
<organism>
    <name type="scientific">Shewanella amazonensis (strain ATCC BAA-1098 / SB2B)</name>
    <dbReference type="NCBI Taxonomy" id="326297"/>
    <lineage>
        <taxon>Bacteria</taxon>
        <taxon>Pseudomonadati</taxon>
        <taxon>Pseudomonadota</taxon>
        <taxon>Gammaproteobacteria</taxon>
        <taxon>Alteromonadales</taxon>
        <taxon>Shewanellaceae</taxon>
        <taxon>Shewanella</taxon>
    </lineage>
</organism>
<gene>
    <name evidence="1" type="primary">secA</name>
    <name type="ordered locus">Sama_0362</name>
</gene>
<sequence length="908" mass="102924">MFGNLLTKIFGSRNDRTLKQLGKVVVKINALEAEYEKLSDEELKAKTAEFKARLEKGESLNELMAEAFATVREASKRVFEMRHFDVQLMGGMVLDSNRIAEMRTGEGKTLTATLPAYLNALTGKGVHVITVNDYLARRDAENNRPLFEFLGMSVGVNVAGLSHADKKAAYDADITYGTNNEFGFDYLRDNMAFSPNDRVQRPLHYALIDEVDSILIDEARTPLIISGAAEDSSELYMRVNKLIPSLIRQEKEDTEEFVGEGDYSIDEKARQVHMTERGQEKVEQLLTEAGLLAEGDSLYSAANISLLHHVNAALRAHTLFEKDVDYVVQNNEVVIVDEHTGRTMPGRRWSEGLHQAVEAKEGVRIQNENQTLASITFQNYFRLYEKLAGMTGTADTEAFEFQHIYGLDTVVVPTNRPMVRKDMPDLVYLTAREKYQAIIADIKDCRERGQPVLVGTVSIEQSELLSRLLNQDKIPHQVLNAKFHEKEAEIVAQAGRSGAVTVATNMAGRGTDIVLGGNWKSEIEALENPSEADIARIRADWEVRHNAVVEAGGLHILGTERHESRRIDNQLRGRSGRQGDPGSSRFYLSMEDNLMRIFASERVANMMKKLGMEEGEAIEHPWVTRAIENAQRKVEARNFDIRKQLLEFDDVANDQRQVVYAQRNELMDAESIEETIKNIQADVVDGVISQYIPPQSVEELWDVPGLEDRLAKEFGLQLPVQEWLDKEDDLHEETLRERIVDTWRQAYEAKEQMVGTPVLRQFEKAVMLQTLDGLWKEHLAAMDHLRQGIHLRGYAQKNPKQEYKRESFELFQQMLETLKHDVIAILSKVQVQAQSDVDEMEARRREEEARIQREYQHAEAESMASDNSELADMASHVPVVRDGEKVGRNDPCPCGSGKKYKQCHGKLT</sequence>
<name>SECA_SHEAM</name>
<comment type="function">
    <text evidence="1">Part of the Sec protein translocase complex. Interacts with the SecYEG preprotein conducting channel. Has a central role in coupling the hydrolysis of ATP to the transfer of proteins into and across the cell membrane, serving both as a receptor for the preprotein-SecB complex and as an ATP-driven molecular motor driving the stepwise translocation of polypeptide chains across the membrane.</text>
</comment>
<comment type="catalytic activity">
    <reaction evidence="1">
        <text>ATP + H2O + cellular proteinSide 1 = ADP + phosphate + cellular proteinSide 2.</text>
        <dbReference type="EC" id="7.4.2.8"/>
    </reaction>
</comment>
<comment type="cofactor">
    <cofactor evidence="1">
        <name>Zn(2+)</name>
        <dbReference type="ChEBI" id="CHEBI:29105"/>
    </cofactor>
    <text evidence="1">May bind 1 zinc ion per subunit.</text>
</comment>
<comment type="subunit">
    <text evidence="1">Monomer and homodimer. Part of the essential Sec protein translocation apparatus which comprises SecA, SecYEG and auxiliary proteins SecDF-YajC and YidC.</text>
</comment>
<comment type="subcellular location">
    <subcellularLocation>
        <location evidence="1">Cell inner membrane</location>
        <topology evidence="1">Peripheral membrane protein</topology>
        <orientation evidence="1">Cytoplasmic side</orientation>
    </subcellularLocation>
    <subcellularLocation>
        <location evidence="1">Cytoplasm</location>
    </subcellularLocation>
    <text evidence="1">Distribution is 50-50.</text>
</comment>
<comment type="similarity">
    <text evidence="1">Belongs to the SecA family.</text>
</comment>
<accession>A1S2G7</accession>